<proteinExistence type="inferred from homology"/>
<organism>
    <name type="scientific">Helicobacter pylori (strain ATCC 700392 / 26695)</name>
    <name type="common">Campylobacter pylori</name>
    <dbReference type="NCBI Taxonomy" id="85962"/>
    <lineage>
        <taxon>Bacteria</taxon>
        <taxon>Pseudomonadati</taxon>
        <taxon>Campylobacterota</taxon>
        <taxon>Epsilonproteobacteria</taxon>
        <taxon>Campylobacterales</taxon>
        <taxon>Helicobacteraceae</taxon>
        <taxon>Helicobacter</taxon>
    </lineage>
</organism>
<feature type="chain" id="PRO_0000196038" description="Small ribosomal subunit protein bS1">
    <location>
        <begin position="1"/>
        <end position="556"/>
    </location>
</feature>
<feature type="domain" description="S1 motif 1" evidence="2">
    <location>
        <begin position="35"/>
        <end position="105"/>
    </location>
</feature>
<feature type="domain" description="S1 motif 2" evidence="2">
    <location>
        <begin position="120"/>
        <end position="183"/>
    </location>
</feature>
<feature type="domain" description="S1 motif 3" evidence="2">
    <location>
        <begin position="204"/>
        <end position="272"/>
    </location>
</feature>
<feature type="domain" description="S1 motif 4" evidence="2">
    <location>
        <begin position="289"/>
        <end position="359"/>
    </location>
</feature>
<feature type="domain" description="S1 motif 5" evidence="2">
    <location>
        <begin position="377"/>
        <end position="444"/>
    </location>
</feature>
<feature type="domain" description="S1 motif 6" evidence="2">
    <location>
        <begin position="461"/>
        <end position="525"/>
    </location>
</feature>
<name>RS1_HELPY</name>
<sequence length="556" mass="62827">MSKIADDQNFNDEEENFAKLFKKELEKEETLEKGTIKEGLVVSINENDGYAMVSVGGKTEGRLALNEITDEKGQLLYQKNDPIIVHVSEKGEHPSVSYKKAISQQKIQAKIEELGENYENAIIEGKIVGKNKGGYIVESQGVEYFLSRSHSSLKNDANHIGKRVKACIIRVDKENHSINISRKRFFEVNDKRQLEVSKELLEATEPVLGVVRQITPFGIFVEAKGIEGLVHYSEISHKGPVNPEKYYKEGDEVYVKAIAYDAEKRRLSLSIKATIEDPWEEIQDKLKPGYAIKVVVSNIEHYGVFVDIGNDIEGFLHVSEISWDKNVSHPNNYLSVGQEIDVKIIDIDPKNRRLRVSLKQLTNRPFDVFESKHQVGDVLEGKVATLTDFGAFLNLGGVDGLLHNHDAFWDKDKKCKDHYKIGDVIKVKILKINKKDKKISLSAKHLVTSPTEEFAQKHKTDSVIQGKVVSIKDFGVFINADGIDVLIKNEDLNPLKKDEIKIGQEITCVVVAIEKSNNKVRASVHRLERKKEKEELQAFNTSDDKMTLGDILKEKL</sequence>
<gene>
    <name type="primary">rpsA</name>
    <name type="ordered locus">HP_0399</name>
</gene>
<dbReference type="EMBL" id="AE000511">
    <property type="protein sequence ID" value="AAD07462.1"/>
    <property type="molecule type" value="Genomic_DNA"/>
</dbReference>
<dbReference type="PIR" id="G64569">
    <property type="entry name" value="G64569"/>
</dbReference>
<dbReference type="RefSeq" id="NP_207197.1">
    <property type="nucleotide sequence ID" value="NC_000915.1"/>
</dbReference>
<dbReference type="RefSeq" id="WP_000034006.1">
    <property type="nucleotide sequence ID" value="NC_018939.1"/>
</dbReference>
<dbReference type="SMR" id="P56008"/>
<dbReference type="DIP" id="DIP-3207N"/>
<dbReference type="FunCoup" id="P56008">
    <property type="interactions" value="362"/>
</dbReference>
<dbReference type="IntAct" id="P56008">
    <property type="interactions" value="10"/>
</dbReference>
<dbReference type="MINT" id="P56008"/>
<dbReference type="STRING" id="85962.HP_0399"/>
<dbReference type="PaxDb" id="85962-C694_02025"/>
<dbReference type="DNASU" id="900079"/>
<dbReference type="EnsemblBacteria" id="AAD07462">
    <property type="protein sequence ID" value="AAD07462"/>
    <property type="gene ID" value="HP_0399"/>
</dbReference>
<dbReference type="KEGG" id="heo:C694_02025"/>
<dbReference type="KEGG" id="hpy:HP_0399"/>
<dbReference type="PATRIC" id="fig|85962.47.peg.423"/>
<dbReference type="eggNOG" id="COG0539">
    <property type="taxonomic scope" value="Bacteria"/>
</dbReference>
<dbReference type="eggNOG" id="COG1185">
    <property type="taxonomic scope" value="Bacteria"/>
</dbReference>
<dbReference type="InParanoid" id="P56008"/>
<dbReference type="OrthoDB" id="9804077at2"/>
<dbReference type="PhylomeDB" id="P56008"/>
<dbReference type="Proteomes" id="UP000000429">
    <property type="component" value="Chromosome"/>
</dbReference>
<dbReference type="GO" id="GO:0022627">
    <property type="term" value="C:cytosolic small ribosomal subunit"/>
    <property type="evidence" value="ECO:0000318"/>
    <property type="project" value="GO_Central"/>
</dbReference>
<dbReference type="GO" id="GO:0003729">
    <property type="term" value="F:mRNA binding"/>
    <property type="evidence" value="ECO:0000318"/>
    <property type="project" value="GO_Central"/>
</dbReference>
<dbReference type="GO" id="GO:0003735">
    <property type="term" value="F:structural constituent of ribosome"/>
    <property type="evidence" value="ECO:0000318"/>
    <property type="project" value="GO_Central"/>
</dbReference>
<dbReference type="GO" id="GO:0006412">
    <property type="term" value="P:translation"/>
    <property type="evidence" value="ECO:0000318"/>
    <property type="project" value="GO_Central"/>
</dbReference>
<dbReference type="CDD" id="cd00164">
    <property type="entry name" value="S1_like"/>
    <property type="match status" value="1"/>
</dbReference>
<dbReference type="CDD" id="cd04465">
    <property type="entry name" value="S1_RPS1_repeat_ec2_hs2"/>
    <property type="match status" value="1"/>
</dbReference>
<dbReference type="FunFam" id="2.40.50.140:FF:000676">
    <property type="match status" value="1"/>
</dbReference>
<dbReference type="FunFam" id="2.40.50.140:FF:000502">
    <property type="entry name" value="30S ribosomal protein S1"/>
    <property type="match status" value="1"/>
</dbReference>
<dbReference type="FunFam" id="2.40.50.140:FF:000103">
    <property type="entry name" value="protein RRP5 homolog"/>
    <property type="match status" value="1"/>
</dbReference>
<dbReference type="Gene3D" id="2.40.50.140">
    <property type="entry name" value="Nucleic acid-binding proteins"/>
    <property type="match status" value="6"/>
</dbReference>
<dbReference type="InterPro" id="IPR012340">
    <property type="entry name" value="NA-bd_OB-fold"/>
</dbReference>
<dbReference type="InterPro" id="IPR050437">
    <property type="entry name" value="Ribos_protein_bS1-like"/>
</dbReference>
<dbReference type="InterPro" id="IPR000110">
    <property type="entry name" value="Ribosomal_bS1"/>
</dbReference>
<dbReference type="InterPro" id="IPR035104">
    <property type="entry name" value="Ribosomal_protein_S1-like"/>
</dbReference>
<dbReference type="InterPro" id="IPR003029">
    <property type="entry name" value="S1_domain"/>
</dbReference>
<dbReference type="NCBIfam" id="NF004956">
    <property type="entry name" value="PRK06299.1-6"/>
    <property type="match status" value="1"/>
</dbReference>
<dbReference type="NCBIfam" id="TIGR00717">
    <property type="entry name" value="rpsA"/>
    <property type="match status" value="1"/>
</dbReference>
<dbReference type="PANTHER" id="PTHR10724">
    <property type="entry name" value="30S RIBOSOMAL PROTEIN S1"/>
    <property type="match status" value="1"/>
</dbReference>
<dbReference type="PANTHER" id="PTHR10724:SF7">
    <property type="entry name" value="SMALL RIBOSOMAL SUBUNIT PROTEIN BS1C"/>
    <property type="match status" value="1"/>
</dbReference>
<dbReference type="Pfam" id="PF00575">
    <property type="entry name" value="S1"/>
    <property type="match status" value="5"/>
</dbReference>
<dbReference type="PRINTS" id="PR00681">
    <property type="entry name" value="RIBOSOMALS1"/>
</dbReference>
<dbReference type="SMART" id="SM00316">
    <property type="entry name" value="S1"/>
    <property type="match status" value="6"/>
</dbReference>
<dbReference type="SUPFAM" id="SSF50249">
    <property type="entry name" value="Nucleic acid-binding proteins"/>
    <property type="match status" value="6"/>
</dbReference>
<dbReference type="PROSITE" id="PS50126">
    <property type="entry name" value="S1"/>
    <property type="match status" value="5"/>
</dbReference>
<keyword id="KW-1185">Reference proteome</keyword>
<keyword id="KW-0677">Repeat</keyword>
<keyword id="KW-0687">Ribonucleoprotein</keyword>
<keyword id="KW-0689">Ribosomal protein</keyword>
<keyword id="KW-0694">RNA-binding</keyword>
<evidence type="ECO:0000250" key="1"/>
<evidence type="ECO:0000255" key="2">
    <source>
        <dbReference type="PROSITE-ProRule" id="PRU00180"/>
    </source>
</evidence>
<evidence type="ECO:0000305" key="3"/>
<reference key="1">
    <citation type="journal article" date="1997" name="Nature">
        <title>The complete genome sequence of the gastric pathogen Helicobacter pylori.</title>
        <authorList>
            <person name="Tomb J.-F."/>
            <person name="White O."/>
            <person name="Kerlavage A.R."/>
            <person name="Clayton R.A."/>
            <person name="Sutton G.G."/>
            <person name="Fleischmann R.D."/>
            <person name="Ketchum K.A."/>
            <person name="Klenk H.-P."/>
            <person name="Gill S.R."/>
            <person name="Dougherty B.A."/>
            <person name="Nelson K.E."/>
            <person name="Quackenbush J."/>
            <person name="Zhou L."/>
            <person name="Kirkness E.F."/>
            <person name="Peterson S.N."/>
            <person name="Loftus B.J."/>
            <person name="Richardson D.L."/>
            <person name="Dodson R.J."/>
            <person name="Khalak H.G."/>
            <person name="Glodek A."/>
            <person name="McKenney K."/>
            <person name="FitzGerald L.M."/>
            <person name="Lee N."/>
            <person name="Adams M.D."/>
            <person name="Hickey E.K."/>
            <person name="Berg D.E."/>
            <person name="Gocayne J.D."/>
            <person name="Utterback T.R."/>
            <person name="Peterson J.D."/>
            <person name="Kelley J.M."/>
            <person name="Cotton M.D."/>
            <person name="Weidman J.F."/>
            <person name="Fujii C."/>
            <person name="Bowman C."/>
            <person name="Watthey L."/>
            <person name="Wallin E."/>
            <person name="Hayes W.S."/>
            <person name="Borodovsky M."/>
            <person name="Karp P.D."/>
            <person name="Smith H.O."/>
            <person name="Fraser C.M."/>
            <person name="Venter J.C."/>
        </authorList>
    </citation>
    <scope>NUCLEOTIDE SEQUENCE [LARGE SCALE GENOMIC DNA]</scope>
    <source>
        <strain>ATCC 700392 / 26695</strain>
    </source>
</reference>
<accession>P56008</accession>
<protein>
    <recommendedName>
        <fullName evidence="3">Small ribosomal subunit protein bS1</fullName>
    </recommendedName>
    <alternativeName>
        <fullName>30S ribosomal protein S1</fullName>
    </alternativeName>
</protein>
<comment type="function">
    <text evidence="1">Binds mRNA; thus facilitating recognition of the initiation point. It is needed to translate mRNA with a short Shine-Dalgarno (SD) purine-rich sequence (By similarity).</text>
</comment>
<comment type="similarity">
    <text evidence="3">Belongs to the bacterial ribosomal protein bS1 family.</text>
</comment>